<gene>
    <name type="primary">MT-ND4L</name>
    <name type="synonym">MTND4L</name>
    <name type="synonym">NADH4L</name>
    <name type="synonym">ND4L</name>
</gene>
<reference key="1">
    <citation type="journal article" date="1998" name="Genetics">
        <title>The complete nucleotide sequence of a snake (Dinodon semicarinatus) mitochondrial genome with two identical control regions.</title>
        <authorList>
            <person name="Kumazawa Y."/>
            <person name="Ota H."/>
            <person name="Nishida M."/>
            <person name="Ozawa T."/>
        </authorList>
    </citation>
    <scope>NUCLEOTIDE SEQUENCE [GENOMIC DNA]</scope>
    <source>
        <tissue>Liver</tissue>
    </source>
</reference>
<name>NU4LM_LYCSM</name>
<proteinExistence type="inferred from homology"/>
<accession>O79554</accession>
<keyword id="KW-0249">Electron transport</keyword>
<keyword id="KW-0472">Membrane</keyword>
<keyword id="KW-0496">Mitochondrion</keyword>
<keyword id="KW-0520">NAD</keyword>
<keyword id="KW-0679">Respiratory chain</keyword>
<keyword id="KW-1278">Translocase</keyword>
<keyword id="KW-0812">Transmembrane</keyword>
<keyword id="KW-1133">Transmembrane helix</keyword>
<keyword id="KW-0813">Transport</keyword>
<keyword id="KW-0830">Ubiquinone</keyword>
<protein>
    <recommendedName>
        <fullName>NADH-ubiquinone oxidoreductase chain 4L</fullName>
        <ecNumber>7.1.1.2</ecNumber>
    </recommendedName>
    <alternativeName>
        <fullName>NADH dehydrogenase subunit 4L</fullName>
    </alternativeName>
</protein>
<feature type="chain" id="PRO_0000118416" description="NADH-ubiquinone oxidoreductase chain 4L">
    <location>
        <begin position="1"/>
        <end position="96"/>
    </location>
</feature>
<feature type="transmembrane region" description="Helical" evidence="3">
    <location>
        <begin position="1"/>
        <end position="21"/>
    </location>
</feature>
<feature type="transmembrane region" description="Helical" evidence="3">
    <location>
        <begin position="27"/>
        <end position="47"/>
    </location>
</feature>
<feature type="transmembrane region" description="Helical" evidence="3">
    <location>
        <begin position="61"/>
        <end position="81"/>
    </location>
</feature>
<geneLocation type="mitochondrion"/>
<evidence type="ECO:0000250" key="1"/>
<evidence type="ECO:0000250" key="2">
    <source>
        <dbReference type="UniProtKB" id="P03901"/>
    </source>
</evidence>
<evidence type="ECO:0000255" key="3"/>
<evidence type="ECO:0000305" key="4"/>
<sequence length="96" mass="10653">MELMKMTLYTTFMITIIALSLQQKHLMLALMCVETMMLIVFTMLVMFNSNSLTVSQTPMPIILLTISVCGAAVGLSLVVAITRTHGNDFLKNLNLL</sequence>
<dbReference type="EC" id="7.1.1.2"/>
<dbReference type="EMBL" id="AB008539">
    <property type="protein sequence ID" value="BAA33030.1"/>
    <property type="molecule type" value="Genomic_DNA"/>
</dbReference>
<dbReference type="PIR" id="T11096">
    <property type="entry name" value="T11096"/>
</dbReference>
<dbReference type="RefSeq" id="NP_008427.1">
    <property type="nucleotide sequence ID" value="NC_001945.1"/>
</dbReference>
<dbReference type="SMR" id="O79554"/>
<dbReference type="GeneID" id="808267"/>
<dbReference type="CTD" id="4539"/>
<dbReference type="GO" id="GO:0031966">
    <property type="term" value="C:mitochondrial membrane"/>
    <property type="evidence" value="ECO:0007669"/>
    <property type="project" value="UniProtKB-SubCell"/>
</dbReference>
<dbReference type="GO" id="GO:0045271">
    <property type="term" value="C:respiratory chain complex I"/>
    <property type="evidence" value="ECO:0000250"/>
    <property type="project" value="UniProtKB"/>
</dbReference>
<dbReference type="GO" id="GO:0008137">
    <property type="term" value="F:NADH dehydrogenase (ubiquinone) activity"/>
    <property type="evidence" value="ECO:0000250"/>
    <property type="project" value="UniProtKB"/>
</dbReference>
<dbReference type="GO" id="GO:0042773">
    <property type="term" value="P:ATP synthesis coupled electron transport"/>
    <property type="evidence" value="ECO:0007669"/>
    <property type="project" value="InterPro"/>
</dbReference>
<dbReference type="Gene3D" id="1.10.287.3510">
    <property type="match status" value="1"/>
</dbReference>
<dbReference type="InterPro" id="IPR001133">
    <property type="entry name" value="NADH_UbQ_OxRdtase_chain4L/K"/>
</dbReference>
<dbReference type="InterPro" id="IPR039428">
    <property type="entry name" value="NUOK/Mnh_C1-like"/>
</dbReference>
<dbReference type="PANTHER" id="PTHR11434:SF0">
    <property type="entry name" value="NADH-UBIQUINONE OXIDOREDUCTASE CHAIN 4L"/>
    <property type="match status" value="1"/>
</dbReference>
<dbReference type="PANTHER" id="PTHR11434">
    <property type="entry name" value="NADH-UBIQUINONE OXIDOREDUCTASE SUBUNIT ND4L"/>
    <property type="match status" value="1"/>
</dbReference>
<dbReference type="Pfam" id="PF00420">
    <property type="entry name" value="Oxidored_q2"/>
    <property type="match status" value="1"/>
</dbReference>
<comment type="function">
    <text evidence="2">Core subunit of the mitochondrial membrane respiratory chain NADH dehydrogenase (Complex I) which catalyzes electron transfer from NADH through the respiratory chain, using ubiquinone as an electron acceptor. Part of the enzyme membrane arm which is embedded in the lipid bilayer and involved in proton translocation.</text>
</comment>
<comment type="catalytic activity">
    <reaction evidence="2">
        <text>a ubiquinone + NADH + 5 H(+)(in) = a ubiquinol + NAD(+) + 4 H(+)(out)</text>
        <dbReference type="Rhea" id="RHEA:29091"/>
        <dbReference type="Rhea" id="RHEA-COMP:9565"/>
        <dbReference type="Rhea" id="RHEA-COMP:9566"/>
        <dbReference type="ChEBI" id="CHEBI:15378"/>
        <dbReference type="ChEBI" id="CHEBI:16389"/>
        <dbReference type="ChEBI" id="CHEBI:17976"/>
        <dbReference type="ChEBI" id="CHEBI:57540"/>
        <dbReference type="ChEBI" id="CHEBI:57945"/>
        <dbReference type="EC" id="7.1.1.2"/>
    </reaction>
    <physiologicalReaction direction="left-to-right" evidence="2">
        <dbReference type="Rhea" id="RHEA:29092"/>
    </physiologicalReaction>
</comment>
<comment type="subcellular location">
    <subcellularLocation>
        <location evidence="1">Mitochondrion membrane</location>
        <topology evidence="1">Multi-pass membrane protein</topology>
    </subcellularLocation>
</comment>
<comment type="similarity">
    <text evidence="4">Belongs to the complex I subunit 4L family.</text>
</comment>
<organism>
    <name type="scientific">Lycodon semicarinatus</name>
    <name type="common">Ryukyu odd-tooth snake</name>
    <name type="synonym">Eumesodon semicarinatus</name>
    <dbReference type="NCBI Taxonomy" id="56549"/>
    <lineage>
        <taxon>Eukaryota</taxon>
        <taxon>Metazoa</taxon>
        <taxon>Chordata</taxon>
        <taxon>Craniata</taxon>
        <taxon>Vertebrata</taxon>
        <taxon>Euteleostomi</taxon>
        <taxon>Lepidosauria</taxon>
        <taxon>Squamata</taxon>
        <taxon>Bifurcata</taxon>
        <taxon>Unidentata</taxon>
        <taxon>Episquamata</taxon>
        <taxon>Toxicofera</taxon>
        <taxon>Serpentes</taxon>
        <taxon>Colubroidea</taxon>
        <taxon>Colubridae</taxon>
        <taxon>Colubrinae</taxon>
        <taxon>Lycodon</taxon>
    </lineage>
</organism>